<name>PSRP6_PEA</name>
<feature type="transit peptide" description="Chloroplast" evidence="1">
    <location>
        <begin position="1"/>
        <end position="39"/>
    </location>
</feature>
<feature type="chain" id="PRO_0000030553" description="Large ribosomal subunit protein cL38">
    <location>
        <begin position="40"/>
        <end position="104"/>
    </location>
</feature>
<feature type="region of interest" description="Disordered" evidence="2">
    <location>
        <begin position="42"/>
        <end position="76"/>
    </location>
</feature>
<feature type="compositionally biased region" description="Basic residues" evidence="2">
    <location>
        <begin position="44"/>
        <end position="60"/>
    </location>
</feature>
<dbReference type="EMBL" id="X14022">
    <property type="protein sequence ID" value="CAA32187.1"/>
    <property type="molecule type" value="mRNA"/>
</dbReference>
<dbReference type="PIR" id="S04687">
    <property type="entry name" value="R5PM25"/>
</dbReference>
<dbReference type="SMR" id="P11892"/>
<dbReference type="EnsemblPlants" id="Psat1g221800.1">
    <property type="protein sequence ID" value="Psat1g221800.1.cds1"/>
    <property type="gene ID" value="Psat1g221800"/>
</dbReference>
<dbReference type="Gramene" id="Psat1g221800.1">
    <property type="protein sequence ID" value="Psat1g221800.1.cds1"/>
    <property type="gene ID" value="Psat1g221800"/>
</dbReference>
<dbReference type="GO" id="GO:0009507">
    <property type="term" value="C:chloroplast"/>
    <property type="evidence" value="ECO:0007669"/>
    <property type="project" value="UniProtKB-SubCell"/>
</dbReference>
<dbReference type="GO" id="GO:1990904">
    <property type="term" value="C:ribonucleoprotein complex"/>
    <property type="evidence" value="ECO:0007669"/>
    <property type="project" value="UniProtKB-KW"/>
</dbReference>
<dbReference type="GO" id="GO:0005840">
    <property type="term" value="C:ribosome"/>
    <property type="evidence" value="ECO:0007669"/>
    <property type="project" value="UniProtKB-KW"/>
</dbReference>
<dbReference type="GO" id="GO:0019843">
    <property type="term" value="F:rRNA binding"/>
    <property type="evidence" value="ECO:0007669"/>
    <property type="project" value="InterPro"/>
</dbReference>
<dbReference type="GO" id="GO:0003735">
    <property type="term" value="F:structural constituent of ribosome"/>
    <property type="evidence" value="ECO:0007669"/>
    <property type="project" value="InterPro"/>
</dbReference>
<dbReference type="GO" id="GO:0006412">
    <property type="term" value="P:translation"/>
    <property type="evidence" value="ECO:0007669"/>
    <property type="project" value="InterPro"/>
</dbReference>
<dbReference type="InterPro" id="IPR020526">
    <property type="entry name" value="Ribosomal_cL38"/>
</dbReference>
<dbReference type="PANTHER" id="PTHR36798">
    <property type="entry name" value="50S RIBOSOMAL PROTEIN 6, CHLOROPLASTIC"/>
    <property type="match status" value="1"/>
</dbReference>
<dbReference type="PANTHER" id="PTHR36798:SF2">
    <property type="entry name" value="LARGE RIBOSOMAL SUBUNIT PROTEIN CL38"/>
    <property type="match status" value="1"/>
</dbReference>
<dbReference type="Pfam" id="PF17257">
    <property type="entry name" value="DUF5323"/>
    <property type="match status" value="1"/>
</dbReference>
<organism>
    <name type="scientific">Pisum sativum</name>
    <name type="common">Garden pea</name>
    <name type="synonym">Lathyrus oleraceus</name>
    <dbReference type="NCBI Taxonomy" id="3888"/>
    <lineage>
        <taxon>Eukaryota</taxon>
        <taxon>Viridiplantae</taxon>
        <taxon>Streptophyta</taxon>
        <taxon>Embryophyta</taxon>
        <taxon>Tracheophyta</taxon>
        <taxon>Spermatophyta</taxon>
        <taxon>Magnoliopsida</taxon>
        <taxon>eudicotyledons</taxon>
        <taxon>Gunneridae</taxon>
        <taxon>Pentapetalae</taxon>
        <taxon>rosids</taxon>
        <taxon>fabids</taxon>
        <taxon>Fabales</taxon>
        <taxon>Fabaceae</taxon>
        <taxon>Papilionoideae</taxon>
        <taxon>50 kb inversion clade</taxon>
        <taxon>NPAAA clade</taxon>
        <taxon>Hologalegina</taxon>
        <taxon>IRL clade</taxon>
        <taxon>Fabeae</taxon>
        <taxon>Pisum</taxon>
    </lineage>
</organism>
<gene>
    <name type="primary">PSRP6</name>
</gene>
<evidence type="ECO:0000250" key="1"/>
<evidence type="ECO:0000256" key="2">
    <source>
        <dbReference type="SAM" id="MobiDB-lite"/>
    </source>
</evidence>
<evidence type="ECO:0000305" key="3"/>
<protein>
    <recommendedName>
        <fullName evidence="3">Large ribosomal subunit protein cL38</fullName>
    </recommendedName>
    <alternativeName>
        <fullName>50S ribosomal protein 6, chloroplastic</fullName>
    </alternativeName>
    <alternativeName>
        <fullName>CL25</fullName>
    </alternativeName>
    <alternativeName>
        <fullName>Plastid-specific 50S ribosomal protein 6</fullName>
        <shortName>PSRP-6</shortName>
    </alternativeName>
</protein>
<reference key="1">
    <citation type="journal article" date="1988" name="Curr. Genet.">
        <title>Nucleotide sequences of cDNAs encoding four complete nuclear-encoded plastid ribosomal proteins.</title>
        <authorList>
            <person name="Gantt J.S."/>
        </authorList>
    </citation>
    <scope>NUCLEOTIDE SEQUENCE [MRNA]</scope>
    <source>
        <strain>cv. Little Marvel</strain>
        <tissue>Seedling</tissue>
    </source>
</reference>
<keyword id="KW-0150">Chloroplast</keyword>
<keyword id="KW-0934">Plastid</keyword>
<keyword id="KW-0687">Ribonucleoprotein</keyword>
<keyword id="KW-0689">Ribosomal protein</keyword>
<keyword id="KW-0809">Transit peptide</keyword>
<accession>P11892</accession>
<sequence length="104" mass="11257">MASVSSIFGCGVSMAPNSSLRNKAIRTERRSACGGLLIECSSRPQKKSTAHHMKTRPRKSRLSDRNRKPTVYAPLPPLPPDFTIVIPADASTVDFTPPPPTPSD</sequence>
<comment type="subunit">
    <text evidence="1">Part of the 50S ribosomal subunit.</text>
</comment>
<comment type="subcellular location">
    <subcellularLocation>
        <location>Plastid</location>
        <location>Chloroplast</location>
    </subcellularLocation>
</comment>
<comment type="similarity">
    <text evidence="3">Belongs to the chloroplast-specific ribosomal protein cL38 family.</text>
</comment>
<proteinExistence type="inferred from homology"/>